<evidence type="ECO:0000250" key="1">
    <source>
        <dbReference type="UniProtKB" id="O35078"/>
    </source>
</evidence>
<evidence type="ECO:0000250" key="2">
    <source>
        <dbReference type="UniProtKB" id="P00371"/>
    </source>
</evidence>
<evidence type="ECO:0000250" key="3">
    <source>
        <dbReference type="UniProtKB" id="P14920"/>
    </source>
</evidence>
<evidence type="ECO:0000250" key="4">
    <source>
        <dbReference type="UniProtKB" id="P18894"/>
    </source>
</evidence>
<evidence type="ECO:0000255" key="5"/>
<evidence type="ECO:0000305" key="6"/>
<evidence type="ECO:0000312" key="7">
    <source>
        <dbReference type="EMBL" id="BAF47375.1"/>
    </source>
</evidence>
<evidence type="ECO:0000312" key="8">
    <source>
        <dbReference type="EMBL" id="EHH66685.1"/>
    </source>
</evidence>
<accession>A2V9Y8</accession>
<accession>G7PI58</accession>
<feature type="chain" id="PRO_0000332729" description="D-amino-acid oxidase">
    <location>
        <begin position="1"/>
        <end position="347"/>
    </location>
</feature>
<feature type="region of interest" description="Required for protein stability" evidence="3">
    <location>
        <begin position="1"/>
        <end position="16"/>
    </location>
</feature>
<feature type="region of interest" description="Active site lid that may open upon substrate/product migration in and out of the active site and close to increase the hydrophobicity of the active site, to make the hydride transfer reaction more efficient" evidence="2">
    <location>
        <begin position="216"/>
        <end position="228"/>
    </location>
</feature>
<feature type="short sequence motif" description="Microbody targeting signal" evidence="5">
    <location>
        <begin position="345"/>
        <end position="347"/>
    </location>
</feature>
<feature type="binding site" evidence="3">
    <location>
        <position position="8"/>
    </location>
    <ligand>
        <name>FAD</name>
        <dbReference type="ChEBI" id="CHEBI:57692"/>
    </ligand>
</feature>
<feature type="binding site" evidence="3">
    <location>
        <position position="9"/>
    </location>
    <ligand>
        <name>FAD</name>
        <dbReference type="ChEBI" id="CHEBI:57692"/>
    </ligand>
</feature>
<feature type="binding site" evidence="3">
    <location>
        <position position="10"/>
    </location>
    <ligand>
        <name>FAD</name>
        <dbReference type="ChEBI" id="CHEBI:57692"/>
    </ligand>
</feature>
<feature type="binding site" evidence="3">
    <location>
        <position position="11"/>
    </location>
    <ligand>
        <name>FAD</name>
        <dbReference type="ChEBI" id="CHEBI:57692"/>
    </ligand>
</feature>
<feature type="binding site" evidence="3">
    <location>
        <position position="37"/>
    </location>
    <ligand>
        <name>FAD</name>
        <dbReference type="ChEBI" id="CHEBI:57692"/>
    </ligand>
</feature>
<feature type="binding site" evidence="3">
    <location>
        <position position="38"/>
    </location>
    <ligand>
        <name>FAD</name>
        <dbReference type="ChEBI" id="CHEBI:57692"/>
    </ligand>
</feature>
<feature type="binding site" evidence="3">
    <location>
        <position position="43"/>
    </location>
    <ligand>
        <name>FAD</name>
        <dbReference type="ChEBI" id="CHEBI:57692"/>
    </ligand>
</feature>
<feature type="binding site" evidence="3">
    <location>
        <position position="44"/>
    </location>
    <ligand>
        <name>FAD</name>
        <dbReference type="ChEBI" id="CHEBI:57692"/>
    </ligand>
</feature>
<feature type="binding site" evidence="3">
    <location>
        <position position="45"/>
    </location>
    <ligand>
        <name>FAD</name>
        <dbReference type="ChEBI" id="CHEBI:57692"/>
    </ligand>
</feature>
<feature type="binding site" evidence="2">
    <location>
        <position position="49"/>
    </location>
    <ligand>
        <name>FAD</name>
        <dbReference type="ChEBI" id="CHEBI:57692"/>
    </ligand>
</feature>
<feature type="binding site" evidence="3">
    <location>
        <position position="50"/>
    </location>
    <ligand>
        <name>FAD</name>
        <dbReference type="ChEBI" id="CHEBI:57692"/>
    </ligand>
</feature>
<feature type="binding site" evidence="3">
    <location>
        <position position="53"/>
    </location>
    <ligand>
        <name>D-dopa</name>
        <dbReference type="ChEBI" id="CHEBI:149689"/>
    </ligand>
</feature>
<feature type="binding site" evidence="2">
    <location>
        <position position="163"/>
    </location>
    <ligand>
        <name>FAD</name>
        <dbReference type="ChEBI" id="CHEBI:57692"/>
    </ligand>
</feature>
<feature type="binding site" evidence="3">
    <location>
        <position position="164"/>
    </location>
    <ligand>
        <name>FAD</name>
        <dbReference type="ChEBI" id="CHEBI:57692"/>
    </ligand>
</feature>
<feature type="binding site" evidence="3">
    <location>
        <position position="182"/>
    </location>
    <ligand>
        <name>FAD</name>
        <dbReference type="ChEBI" id="CHEBI:57692"/>
    </ligand>
</feature>
<feature type="binding site" evidence="3">
    <location>
        <position position="224"/>
    </location>
    <ligand>
        <name>D-serine</name>
        <dbReference type="ChEBI" id="CHEBI:35247"/>
    </ligand>
</feature>
<feature type="binding site" evidence="2">
    <location>
        <position position="228"/>
    </location>
    <ligand>
        <name>D-proline</name>
        <dbReference type="ChEBI" id="CHEBI:57726"/>
    </ligand>
</feature>
<feature type="binding site" evidence="3">
    <location>
        <position position="228"/>
    </location>
    <ligand>
        <name>D-serine</name>
        <dbReference type="ChEBI" id="CHEBI:35247"/>
    </ligand>
</feature>
<feature type="binding site" evidence="3">
    <location>
        <position position="283"/>
    </location>
    <ligand>
        <name>D-dopa</name>
        <dbReference type="ChEBI" id="CHEBI:149689"/>
    </ligand>
</feature>
<feature type="binding site" evidence="2">
    <location>
        <position position="283"/>
    </location>
    <ligand>
        <name>D-proline</name>
        <dbReference type="ChEBI" id="CHEBI:57726"/>
    </ligand>
</feature>
<feature type="binding site" evidence="3">
    <location>
        <position position="283"/>
    </location>
    <ligand>
        <name>D-serine</name>
        <dbReference type="ChEBI" id="CHEBI:35247"/>
    </ligand>
</feature>
<feature type="binding site" evidence="3">
    <location>
        <position position="283"/>
    </location>
    <ligand>
        <name>FAD</name>
        <dbReference type="ChEBI" id="CHEBI:57692"/>
    </ligand>
</feature>
<feature type="binding site" evidence="3">
    <location>
        <position position="312"/>
    </location>
    <ligand>
        <name>FAD</name>
        <dbReference type="ChEBI" id="CHEBI:57692"/>
    </ligand>
</feature>
<feature type="binding site" evidence="3">
    <location>
        <position position="313"/>
    </location>
    <ligand>
        <name>D-dopa</name>
        <dbReference type="ChEBI" id="CHEBI:149689"/>
    </ligand>
</feature>
<feature type="binding site" evidence="2">
    <location>
        <position position="313"/>
    </location>
    <ligand>
        <name>D-proline</name>
        <dbReference type="ChEBI" id="CHEBI:57726"/>
    </ligand>
</feature>
<feature type="binding site" evidence="3">
    <location>
        <position position="313"/>
    </location>
    <ligand>
        <name>D-serine</name>
        <dbReference type="ChEBI" id="CHEBI:35247"/>
    </ligand>
</feature>
<feature type="binding site" evidence="3">
    <location>
        <position position="313"/>
    </location>
    <ligand>
        <name>FAD</name>
        <dbReference type="ChEBI" id="CHEBI:57692"/>
    </ligand>
</feature>
<feature type="binding site" evidence="3">
    <location>
        <position position="315"/>
    </location>
    <ligand>
        <name>FAD</name>
        <dbReference type="ChEBI" id="CHEBI:57692"/>
    </ligand>
</feature>
<feature type="binding site" evidence="3">
    <location>
        <position position="316"/>
    </location>
    <ligand>
        <name>FAD</name>
        <dbReference type="ChEBI" id="CHEBI:57692"/>
    </ligand>
</feature>
<feature type="binding site" evidence="3">
    <location>
        <position position="317"/>
    </location>
    <ligand>
        <name>FAD</name>
        <dbReference type="ChEBI" id="CHEBI:57692"/>
    </ligand>
</feature>
<feature type="sequence conflict" description="In Ref. 1; BAF47375." evidence="6" ref="1">
    <original>C</original>
    <variation>R</variation>
    <location>
        <position position="22"/>
    </location>
</feature>
<feature type="sequence conflict" description="In Ref. 1; BAF47375." evidence="6" ref="1">
    <original>Y</original>
    <variation>H</variation>
    <location>
        <position position="74"/>
    </location>
</feature>
<feature type="sequence conflict" description="In Ref. 1; BAF47375." evidence="6" ref="1">
    <original>D</original>
    <variation>N</variation>
    <location>
        <position position="104"/>
    </location>
</feature>
<reference evidence="7" key="1">
    <citation type="submission" date="2006-08" db="EMBL/GenBank/DDBJ databases">
        <title>Analysis of gene expression in cynomolgus monkey tissues by macaque cDNA microarray.</title>
        <authorList>
            <person name="Kobayashi M."/>
            <person name="Uno Y."/>
            <person name="Suzuki Y."/>
            <person name="Osada N."/>
            <person name="Kusuda J."/>
            <person name="Sugano S."/>
            <person name="Inoue I."/>
            <person name="Hashimoto K."/>
        </authorList>
    </citation>
    <scope>NUCLEOTIDE SEQUENCE [LARGE SCALE MRNA]</scope>
    <source>
        <tissue>Liver</tissue>
    </source>
</reference>
<reference evidence="8" key="2">
    <citation type="journal article" date="2011" name="Nat. Biotechnol.">
        <title>Genome sequencing and comparison of two nonhuman primate animal models, the cynomolgus and Chinese rhesus macaques.</title>
        <authorList>
            <person name="Yan G."/>
            <person name="Zhang G."/>
            <person name="Fang X."/>
            <person name="Zhang Y."/>
            <person name="Li C."/>
            <person name="Ling F."/>
            <person name="Cooper D.N."/>
            <person name="Li Q."/>
            <person name="Li Y."/>
            <person name="van Gool A.J."/>
            <person name="Du H."/>
            <person name="Chen J."/>
            <person name="Chen R."/>
            <person name="Zhang P."/>
            <person name="Huang Z."/>
            <person name="Thompson J.R."/>
            <person name="Meng Y."/>
            <person name="Bai Y."/>
            <person name="Wang J."/>
            <person name="Zhuo M."/>
            <person name="Wang T."/>
            <person name="Huang Y."/>
            <person name="Wei L."/>
            <person name="Li J."/>
            <person name="Wang Z."/>
            <person name="Hu H."/>
            <person name="Yang P."/>
            <person name="Le L."/>
            <person name="Stenson P.D."/>
            <person name="Li B."/>
            <person name="Liu X."/>
            <person name="Ball E.V."/>
            <person name="An N."/>
            <person name="Huang Q."/>
            <person name="Zhang Y."/>
            <person name="Fan W."/>
            <person name="Zhang X."/>
            <person name="Li Y."/>
            <person name="Wang W."/>
            <person name="Katze M.G."/>
            <person name="Su B."/>
            <person name="Nielsen R."/>
            <person name="Yang H."/>
            <person name="Wang J."/>
            <person name="Wang X."/>
            <person name="Wang J."/>
        </authorList>
    </citation>
    <scope>NUCLEOTIDE SEQUENCE [LARGE SCALE GENOMIC DNA]</scope>
    <source>
        <strain evidence="8">CE-4</strain>
    </source>
</reference>
<proteinExistence type="evidence at transcript level"/>
<comment type="function">
    <text evidence="1 3 4">Catalyzes the oxidative deamination of D-amino acids with broad substrate specificity. Required to catabolize D-amino acids synthesized endogenously, of gastrointestinal bacterial origin or obtained from the diet, and to use these as nutrients. Regulates the level of D-amino acid neurotransmitters in the brain, such as D-serine, a co-agonist of N-methyl D-aspartate (NMDA) receptors, and may modulate synaptic transmission. Catalyzes the first step of the racemization of D-DOPA to L-DOPA, for possible use in an alternative dopamine biosynthesis pathway. Also catalyzes the first step of the chiral inversion of N(gamma)-nitro-D-arginine methyl ester (D-NNA) to its L-enantiomer L-NNA that acts as a nitric oxide synthase inhibitor. The hydrogen peroxide produced in the reaction provides protection against microbial infection; it contributes to the oxidative killing activity of phagocytic leukocytes and protects against bacterial colonization of the small intestine. Enzyme secreted into the lumen of the intestine may not be catalytically active and could instead be proteolytically cleaved into peptides with antimicrobial activity (By similarity). The hydrogen peroxide produced in the reaction may also play a role in promoting cellular senescence in response to DNA damage (By similarity). Could act as a detoxifying agent which removes D-amino acids accumulated during aging (By similarity).</text>
</comment>
<comment type="catalytic activity">
    <reaction evidence="4">
        <text>a D-alpha-amino acid + O2 + H2O = a 2-oxocarboxylate + H2O2 + NH4(+)</text>
        <dbReference type="Rhea" id="RHEA:21816"/>
        <dbReference type="ChEBI" id="CHEBI:15377"/>
        <dbReference type="ChEBI" id="CHEBI:15379"/>
        <dbReference type="ChEBI" id="CHEBI:16240"/>
        <dbReference type="ChEBI" id="CHEBI:28938"/>
        <dbReference type="ChEBI" id="CHEBI:35179"/>
        <dbReference type="ChEBI" id="CHEBI:59871"/>
        <dbReference type="EC" id="1.4.3.3"/>
    </reaction>
    <physiologicalReaction direction="left-to-right" evidence="4">
        <dbReference type="Rhea" id="RHEA:21817"/>
    </physiologicalReaction>
</comment>
<comment type="catalytic activity">
    <reaction evidence="4">
        <text>D-alanine + O2 + H2O = pyruvate + H2O2 + NH4(+)</text>
        <dbReference type="Rhea" id="RHEA:22688"/>
        <dbReference type="ChEBI" id="CHEBI:15361"/>
        <dbReference type="ChEBI" id="CHEBI:15377"/>
        <dbReference type="ChEBI" id="CHEBI:15379"/>
        <dbReference type="ChEBI" id="CHEBI:16240"/>
        <dbReference type="ChEBI" id="CHEBI:28938"/>
        <dbReference type="ChEBI" id="CHEBI:57416"/>
    </reaction>
    <physiologicalReaction direction="left-to-right" evidence="4">
        <dbReference type="Rhea" id="RHEA:22689"/>
    </physiologicalReaction>
</comment>
<comment type="catalytic activity">
    <reaction evidence="3">
        <text>D-cysteine + O2 + H2O = 2-oxo-3-sulfanylpropanoate + H2O2 + NH4(+)</text>
        <dbReference type="Rhea" id="RHEA:78791"/>
        <dbReference type="ChEBI" id="CHEBI:15377"/>
        <dbReference type="ChEBI" id="CHEBI:15379"/>
        <dbReference type="ChEBI" id="CHEBI:16240"/>
        <dbReference type="ChEBI" id="CHEBI:28938"/>
        <dbReference type="ChEBI" id="CHEBI:35236"/>
        <dbReference type="ChEBI" id="CHEBI:57678"/>
    </reaction>
    <physiologicalReaction direction="left-to-right" evidence="3">
        <dbReference type="Rhea" id="RHEA:78792"/>
    </physiologicalReaction>
</comment>
<comment type="catalytic activity">
    <reaction evidence="3">
        <text>D-dopa + O2 + H2O = 3-(3,4-dihydroxyphenyl)pyruvate + H2O2 + NH4(+)</text>
        <dbReference type="Rhea" id="RHEA:70971"/>
        <dbReference type="ChEBI" id="CHEBI:15377"/>
        <dbReference type="ChEBI" id="CHEBI:15379"/>
        <dbReference type="ChEBI" id="CHEBI:16240"/>
        <dbReference type="ChEBI" id="CHEBI:28938"/>
        <dbReference type="ChEBI" id="CHEBI:29055"/>
        <dbReference type="ChEBI" id="CHEBI:149689"/>
    </reaction>
    <physiologicalReaction direction="left-to-right" evidence="3">
        <dbReference type="Rhea" id="RHEA:70972"/>
    </physiologicalReaction>
</comment>
<comment type="catalytic activity">
    <reaction evidence="4">
        <text>D-leucine + O2 + H2O = 4-methyl-2-oxopentanoate + H2O2 + NH4(+)</text>
        <dbReference type="Rhea" id="RHEA:78211"/>
        <dbReference type="ChEBI" id="CHEBI:15377"/>
        <dbReference type="ChEBI" id="CHEBI:15379"/>
        <dbReference type="ChEBI" id="CHEBI:16240"/>
        <dbReference type="ChEBI" id="CHEBI:17865"/>
        <dbReference type="ChEBI" id="CHEBI:28938"/>
        <dbReference type="ChEBI" id="CHEBI:143079"/>
    </reaction>
    <physiologicalReaction direction="left-to-right" evidence="4">
        <dbReference type="Rhea" id="RHEA:78212"/>
    </physiologicalReaction>
</comment>
<comment type="catalytic activity">
    <reaction evidence="2">
        <text>D-lysine + O2 + H2O = 6-amino-2-oxohexanoate + H2O2 + NH4(+)</text>
        <dbReference type="Rhea" id="RHEA:37583"/>
        <dbReference type="ChEBI" id="CHEBI:15377"/>
        <dbReference type="ChEBI" id="CHEBI:15379"/>
        <dbReference type="ChEBI" id="CHEBI:16240"/>
        <dbReference type="ChEBI" id="CHEBI:28938"/>
        <dbReference type="ChEBI" id="CHEBI:32557"/>
        <dbReference type="ChEBI" id="CHEBI:58183"/>
        <dbReference type="EC" id="1.4.3.3"/>
    </reaction>
    <physiologicalReaction direction="left-to-right" evidence="2">
        <dbReference type="Rhea" id="RHEA:37584"/>
    </physiologicalReaction>
</comment>
<comment type="catalytic activity">
    <reaction evidence="2">
        <text>D-methionine + O2 + H2O = 4-methylsulfanyl-2-oxobutanoate + H2O2 + NH4(+)</text>
        <dbReference type="Rhea" id="RHEA:78207"/>
        <dbReference type="ChEBI" id="CHEBI:15377"/>
        <dbReference type="ChEBI" id="CHEBI:15379"/>
        <dbReference type="ChEBI" id="CHEBI:16240"/>
        <dbReference type="ChEBI" id="CHEBI:16723"/>
        <dbReference type="ChEBI" id="CHEBI:28938"/>
        <dbReference type="ChEBI" id="CHEBI:57932"/>
    </reaction>
    <physiologicalReaction direction="left-to-right" evidence="2">
        <dbReference type="Rhea" id="RHEA:78208"/>
    </physiologicalReaction>
</comment>
<comment type="catalytic activity">
    <reaction evidence="4">
        <text>D-phenylalanine + O2 + H2O = 3-phenylpyruvate + H2O2 + NH4(+)</text>
        <dbReference type="Rhea" id="RHEA:70963"/>
        <dbReference type="ChEBI" id="CHEBI:15377"/>
        <dbReference type="ChEBI" id="CHEBI:15379"/>
        <dbReference type="ChEBI" id="CHEBI:16240"/>
        <dbReference type="ChEBI" id="CHEBI:18005"/>
        <dbReference type="ChEBI" id="CHEBI:28938"/>
        <dbReference type="ChEBI" id="CHEBI:57981"/>
    </reaction>
    <physiologicalReaction direction="left-to-right" evidence="4">
        <dbReference type="Rhea" id="RHEA:70964"/>
    </physiologicalReaction>
</comment>
<comment type="catalytic activity">
    <reaction evidence="3">
        <text>D-proline + O2 = 1-pyrroline-2-carboxylate + H2O2</text>
        <dbReference type="Rhea" id="RHEA:78259"/>
        <dbReference type="ChEBI" id="CHEBI:15379"/>
        <dbReference type="ChEBI" id="CHEBI:16240"/>
        <dbReference type="ChEBI" id="CHEBI:39785"/>
        <dbReference type="ChEBI" id="CHEBI:57726"/>
    </reaction>
    <physiologicalReaction direction="left-to-right" evidence="3">
        <dbReference type="Rhea" id="RHEA:78260"/>
    </physiologicalReaction>
</comment>
<comment type="catalytic activity">
    <reaction evidence="4">
        <text>D-serine + O2 + H2O = 3-hydroxypyruvate + H2O2 + NH4(+)</text>
        <dbReference type="Rhea" id="RHEA:70951"/>
        <dbReference type="ChEBI" id="CHEBI:15377"/>
        <dbReference type="ChEBI" id="CHEBI:15379"/>
        <dbReference type="ChEBI" id="CHEBI:16240"/>
        <dbReference type="ChEBI" id="CHEBI:17180"/>
        <dbReference type="ChEBI" id="CHEBI:28938"/>
        <dbReference type="ChEBI" id="CHEBI:35247"/>
    </reaction>
    <physiologicalReaction direction="left-to-right" evidence="4">
        <dbReference type="Rhea" id="RHEA:70952"/>
    </physiologicalReaction>
</comment>
<comment type="catalytic activity">
    <reaction evidence="4">
        <text>D-tryptophan + O2 + H2O = indole-3-pyruvate + H2O2 + NH4(+)</text>
        <dbReference type="Rhea" id="RHEA:78247"/>
        <dbReference type="ChEBI" id="CHEBI:15377"/>
        <dbReference type="ChEBI" id="CHEBI:15379"/>
        <dbReference type="ChEBI" id="CHEBI:16240"/>
        <dbReference type="ChEBI" id="CHEBI:17640"/>
        <dbReference type="ChEBI" id="CHEBI:28938"/>
        <dbReference type="ChEBI" id="CHEBI:57719"/>
    </reaction>
    <physiologicalReaction direction="left-to-right" evidence="4">
        <dbReference type="Rhea" id="RHEA:78248"/>
    </physiologicalReaction>
</comment>
<comment type="catalytic activity">
    <reaction evidence="4">
        <text>D-valine + O2 + H2O = 3-methyl-2-oxobutanoate + H2O2 + NH4(+)</text>
        <dbReference type="Rhea" id="RHEA:78203"/>
        <dbReference type="ChEBI" id="CHEBI:11851"/>
        <dbReference type="ChEBI" id="CHEBI:15377"/>
        <dbReference type="ChEBI" id="CHEBI:15379"/>
        <dbReference type="ChEBI" id="CHEBI:16240"/>
        <dbReference type="ChEBI" id="CHEBI:28938"/>
        <dbReference type="ChEBI" id="CHEBI:74338"/>
    </reaction>
    <physiologicalReaction direction="left-to-right" evidence="4">
        <dbReference type="Rhea" id="RHEA:78204"/>
    </physiologicalReaction>
</comment>
<comment type="cofactor">
    <cofactor evidence="4">
        <name>FAD</name>
        <dbReference type="ChEBI" id="CHEBI:57692"/>
    </cofactor>
</comment>
<comment type="subunit">
    <text evidence="1">Interacts with BSN (via coiled region); the interaction is direct and inhibits DAO enzyme activity.</text>
</comment>
<comment type="subcellular location">
    <subcellularLocation>
        <location evidence="4">Peroxisome matrix</location>
    </subcellularLocation>
    <subcellularLocation>
        <location evidence="3">Cytoplasm</location>
        <location evidence="3">Cytosol</location>
    </subcellularLocation>
    <subcellularLocation>
        <location evidence="1">Presynaptic active zone</location>
    </subcellularLocation>
    <subcellularLocation>
        <location evidence="4">Secreted</location>
    </subcellularLocation>
    <text evidence="1 3 4">Transiently present in the cytosol before being delivered to the peroxisomes (By similarity). In the cerebellum, a fraction of protein localizes to the presynaptic active zone, where its activity is regulated by protein BSN (By similarity). Secreted into the lumen of the small intestine (By similarity).</text>
</comment>
<comment type="PTM">
    <text evidence="3">Phosphorylated in the cerebellum; probably not by PRKACA, PRKCA or PRKCE.</text>
</comment>
<comment type="PTM">
    <text evidence="3">May be S-nitrosylated, which partially inactivates the enzyme.</text>
</comment>
<comment type="similarity">
    <text evidence="6">Belongs to the DAMOX/DASOX family.</text>
</comment>
<protein>
    <recommendedName>
        <fullName>D-amino-acid oxidase</fullName>
        <shortName>DAAO</shortName>
        <shortName>DAMOX</shortName>
        <shortName>DAO</shortName>
        <ecNumber evidence="3">1.4.3.3</ecNumber>
    </recommendedName>
</protein>
<keyword id="KW-0966">Cell projection</keyword>
<keyword id="KW-0963">Cytoplasm</keyword>
<keyword id="KW-0274">FAD</keyword>
<keyword id="KW-0285">Flavoprotein</keyword>
<keyword id="KW-0560">Oxidoreductase</keyword>
<keyword id="KW-0576">Peroxisome</keyword>
<keyword id="KW-0597">Phosphoprotein</keyword>
<keyword id="KW-1185">Reference proteome</keyword>
<keyword id="KW-0702">S-nitrosylation</keyword>
<keyword id="KW-0964">Secreted</keyword>
<keyword id="KW-0770">Synapse</keyword>
<name>OXDA_MACFA</name>
<sequence length="347" mass="39387">MRVVVIGAGVIGLSTALCIHECYHSVLQPLDIKVYADRFTPLTTTDVAAGFWQPYLSDPSNPKEADWSQQTFDYLLSHIHSPNAEKLGLFLISGYNLFHEAIPDPSWKDTVLGFRKLTPRELDIFPDYSYGWFHTSLILEGKNYLQWLTERLTERGVKFFQRKVESFEEVAREGADVIVNCTGVWAGVLQPDPLLQPGRGQIIKVDAPWIKHFILTHEPESGIYNSPYIIPGTQTVTLGGIFQLGNWNELNNIQDHNTIWEGCCRLEPTLKNARIVDERTGFRPVRPKIRLEREQLRVGPSNTEVIHNYGHGGYGLTIHWGCALEAAKLFGRILEEKKLSKMPPSHL</sequence>
<dbReference type="EC" id="1.4.3.3" evidence="3"/>
<dbReference type="EMBL" id="AK240621">
    <property type="protein sequence ID" value="BAF47375.1"/>
    <property type="molecule type" value="mRNA"/>
</dbReference>
<dbReference type="EMBL" id="CM001286">
    <property type="protein sequence ID" value="EHH66685.1"/>
    <property type="molecule type" value="Genomic_DNA"/>
</dbReference>
<dbReference type="RefSeq" id="NP_001270878.1">
    <property type="nucleotide sequence ID" value="NM_001283949.1"/>
</dbReference>
<dbReference type="SMR" id="A2V9Y8"/>
<dbReference type="STRING" id="9541.ENSMFAP00000009386"/>
<dbReference type="eggNOG" id="KOG3923">
    <property type="taxonomic scope" value="Eukaryota"/>
</dbReference>
<dbReference type="Proteomes" id="UP000009130">
    <property type="component" value="Chromosome 11"/>
</dbReference>
<dbReference type="Proteomes" id="UP000233100">
    <property type="component" value="Unplaced"/>
</dbReference>
<dbReference type="GO" id="GO:0042995">
    <property type="term" value="C:cell projection"/>
    <property type="evidence" value="ECO:0007669"/>
    <property type="project" value="UniProtKB-KW"/>
</dbReference>
<dbReference type="GO" id="GO:0005829">
    <property type="term" value="C:cytosol"/>
    <property type="evidence" value="ECO:0007669"/>
    <property type="project" value="UniProtKB-SubCell"/>
</dbReference>
<dbReference type="GO" id="GO:0005576">
    <property type="term" value="C:extracellular region"/>
    <property type="evidence" value="ECO:0007669"/>
    <property type="project" value="UniProtKB-SubCell"/>
</dbReference>
<dbReference type="GO" id="GO:0005782">
    <property type="term" value="C:peroxisomal matrix"/>
    <property type="evidence" value="ECO:0000250"/>
    <property type="project" value="UniProtKB"/>
</dbReference>
<dbReference type="GO" id="GO:0005777">
    <property type="term" value="C:peroxisome"/>
    <property type="evidence" value="ECO:0000250"/>
    <property type="project" value="UniProtKB"/>
</dbReference>
<dbReference type="GO" id="GO:0048786">
    <property type="term" value="C:presynaptic active zone"/>
    <property type="evidence" value="ECO:0000250"/>
    <property type="project" value="UniProtKB"/>
</dbReference>
<dbReference type="GO" id="GO:0003884">
    <property type="term" value="F:D-amino-acid oxidase activity"/>
    <property type="evidence" value="ECO:0007669"/>
    <property type="project" value="UniProtKB-EC"/>
</dbReference>
<dbReference type="GO" id="GO:0071949">
    <property type="term" value="F:FAD binding"/>
    <property type="evidence" value="ECO:0007669"/>
    <property type="project" value="InterPro"/>
</dbReference>
<dbReference type="GO" id="GO:0043799">
    <property type="term" value="F:glycine oxidase activity"/>
    <property type="evidence" value="ECO:0007669"/>
    <property type="project" value="RHEA"/>
</dbReference>
<dbReference type="GO" id="GO:0055130">
    <property type="term" value="P:D-alanine catabolic process"/>
    <property type="evidence" value="ECO:0007669"/>
    <property type="project" value="TreeGrafter"/>
</dbReference>
<dbReference type="GO" id="GO:0036088">
    <property type="term" value="P:D-serine catabolic process"/>
    <property type="evidence" value="ECO:0007669"/>
    <property type="project" value="TreeGrafter"/>
</dbReference>
<dbReference type="GO" id="GO:0007586">
    <property type="term" value="P:digestion"/>
    <property type="evidence" value="ECO:0000250"/>
    <property type="project" value="UniProtKB"/>
</dbReference>
<dbReference type="GO" id="GO:0042416">
    <property type="term" value="P:dopamine biosynthetic process"/>
    <property type="evidence" value="ECO:0000250"/>
    <property type="project" value="UniProtKB"/>
</dbReference>
<dbReference type="GO" id="GO:0070945">
    <property type="term" value="P:neutrophil-mediated killing of gram-negative bacterium"/>
    <property type="evidence" value="ECO:0000250"/>
    <property type="project" value="UniProtKB"/>
</dbReference>
<dbReference type="GO" id="GO:0006562">
    <property type="term" value="P:proline catabolic process"/>
    <property type="evidence" value="ECO:0007669"/>
    <property type="project" value="TreeGrafter"/>
</dbReference>
<dbReference type="FunFam" id="3.40.50.720:FF:000641">
    <property type="entry name" value="D-amino acid oxidase"/>
    <property type="match status" value="1"/>
</dbReference>
<dbReference type="FunFam" id="3.30.9.10:FF:000004">
    <property type="entry name" value="D-amino-acid oxidase"/>
    <property type="match status" value="1"/>
</dbReference>
<dbReference type="Gene3D" id="3.30.9.10">
    <property type="entry name" value="D-Amino Acid Oxidase, subunit A, domain 2"/>
    <property type="match status" value="1"/>
</dbReference>
<dbReference type="Gene3D" id="3.40.50.720">
    <property type="entry name" value="NAD(P)-binding Rossmann-like Domain"/>
    <property type="match status" value="1"/>
</dbReference>
<dbReference type="InterPro" id="IPR006181">
    <property type="entry name" value="D-amino_acid_oxidase_CS"/>
</dbReference>
<dbReference type="InterPro" id="IPR023209">
    <property type="entry name" value="DAO"/>
</dbReference>
<dbReference type="InterPro" id="IPR006076">
    <property type="entry name" value="FAD-dep_OxRdtase"/>
</dbReference>
<dbReference type="PANTHER" id="PTHR11530">
    <property type="entry name" value="D-AMINO ACID OXIDASE"/>
    <property type="match status" value="1"/>
</dbReference>
<dbReference type="PANTHER" id="PTHR11530:SF15">
    <property type="entry name" value="D-AMINO-ACID OXIDASE"/>
    <property type="match status" value="1"/>
</dbReference>
<dbReference type="Pfam" id="PF01266">
    <property type="entry name" value="DAO"/>
    <property type="match status" value="1"/>
</dbReference>
<dbReference type="PIRSF" id="PIRSF000189">
    <property type="entry name" value="D-aa_oxidase"/>
    <property type="match status" value="1"/>
</dbReference>
<dbReference type="SUPFAM" id="SSF54373">
    <property type="entry name" value="FAD-linked reductases, C-terminal domain"/>
    <property type="match status" value="1"/>
</dbReference>
<dbReference type="SUPFAM" id="SSF51971">
    <property type="entry name" value="Nucleotide-binding domain"/>
    <property type="match status" value="1"/>
</dbReference>
<dbReference type="PROSITE" id="PS00677">
    <property type="entry name" value="DAO"/>
    <property type="match status" value="1"/>
</dbReference>
<organism>
    <name type="scientific">Macaca fascicularis</name>
    <name type="common">Crab-eating macaque</name>
    <name type="synonym">Cynomolgus monkey</name>
    <dbReference type="NCBI Taxonomy" id="9541"/>
    <lineage>
        <taxon>Eukaryota</taxon>
        <taxon>Metazoa</taxon>
        <taxon>Chordata</taxon>
        <taxon>Craniata</taxon>
        <taxon>Vertebrata</taxon>
        <taxon>Euteleostomi</taxon>
        <taxon>Mammalia</taxon>
        <taxon>Eutheria</taxon>
        <taxon>Euarchontoglires</taxon>
        <taxon>Primates</taxon>
        <taxon>Haplorrhini</taxon>
        <taxon>Catarrhini</taxon>
        <taxon>Cercopithecidae</taxon>
        <taxon>Cercopithecinae</taxon>
        <taxon>Macaca</taxon>
    </lineage>
</organism>
<gene>
    <name type="primary">DAO</name>
    <name type="ORF">Qlv-U252A-C12</name>
</gene>